<evidence type="ECO:0000250" key="1">
    <source>
        <dbReference type="UniProtKB" id="P0A0D6"/>
    </source>
</evidence>
<evidence type="ECO:0000250" key="2">
    <source>
        <dbReference type="UniProtKB" id="P23532"/>
    </source>
</evidence>
<evidence type="ECO:0000255" key="3">
    <source>
        <dbReference type="PROSITE-ProRule" id="PRU00418"/>
    </source>
</evidence>
<evidence type="ECO:0000303" key="4">
    <source>
    </source>
</evidence>
<evidence type="ECO:0000305" key="5"/>
<evidence type="ECO:0000305" key="6">
    <source>
    </source>
</evidence>
<name>PTLA_STRMU</name>
<keyword id="KW-0963">Cytoplasm</keyword>
<keyword id="KW-0460">Magnesium</keyword>
<keyword id="KW-0479">Metal-binding</keyword>
<keyword id="KW-0597">Phosphoprotein</keyword>
<keyword id="KW-0598">Phosphotransferase system</keyword>
<keyword id="KW-1185">Reference proteome</keyword>
<keyword id="KW-0762">Sugar transport</keyword>
<keyword id="KW-0808">Transferase</keyword>
<keyword id="KW-0813">Transport</keyword>
<accession>P26426</accession>
<reference key="1">
    <citation type="journal article" date="1992" name="J. Bacteriol.">
        <title>Nucleotide and deduced amino acid sequences of the lacR, lacABCD, and lacFE genes encoding the repressor, tagatose 6-phosphate gene cluster, and sugar-specific phosphotransferase system components of the lactose operon of Streptococcus mutans.</title>
        <authorList>
            <person name="Rosey E.L."/>
            <person name="Stewart G.C."/>
        </authorList>
    </citation>
    <scope>NUCLEOTIDE SEQUENCE [GENOMIC DNA]</scope>
</reference>
<reference key="2">
    <citation type="journal article" date="2002" name="Proc. Natl. Acad. Sci. U.S.A.">
        <title>Genome sequence of Streptococcus mutans UA159, a cariogenic dental pathogen.</title>
        <authorList>
            <person name="Ajdic D.J."/>
            <person name="McShan W.M."/>
            <person name="McLaughlin R.E."/>
            <person name="Savic G."/>
            <person name="Chang J."/>
            <person name="Carson M.B."/>
            <person name="Primeaux C."/>
            <person name="Tian R."/>
            <person name="Kenton S."/>
            <person name="Jia H.G."/>
            <person name="Lin S.P."/>
            <person name="Qian Y."/>
            <person name="Li S."/>
            <person name="Zhu H."/>
            <person name="Najar F.Z."/>
            <person name="Lai H."/>
            <person name="White J."/>
            <person name="Roe B.A."/>
            <person name="Ferretti J.J."/>
        </authorList>
    </citation>
    <scope>NUCLEOTIDE SEQUENCE [LARGE SCALE GENOMIC DNA]</scope>
    <source>
        <strain>ATCC 700610 / UA159</strain>
    </source>
</reference>
<reference key="3">
    <citation type="journal article" date="1984" name="Infect. Immun.">
        <title>Lactose transport in Streptococcus mutans: isolation and characterization of factor IIIlac, a specific protein component of the phosphoenolpyruvate-lactose phosphotransferase system.</title>
        <authorList>
            <person name="Vadeboncoeur C."/>
            <person name="Proulx M."/>
        </authorList>
    </citation>
    <scope>FUNCTION</scope>
    <source>
        <strain>ATCC 27352</strain>
    </source>
</reference>
<organism>
    <name type="scientific">Streptococcus mutans serotype c (strain ATCC 700610 / UA159)</name>
    <dbReference type="NCBI Taxonomy" id="210007"/>
    <lineage>
        <taxon>Bacteria</taxon>
        <taxon>Bacillati</taxon>
        <taxon>Bacillota</taxon>
        <taxon>Bacilli</taxon>
        <taxon>Lactobacillales</taxon>
        <taxon>Streptococcaceae</taxon>
        <taxon>Streptococcus</taxon>
    </lineage>
</organism>
<proteinExistence type="inferred from homology"/>
<protein>
    <recommendedName>
        <fullName evidence="4">PTS system lactose-specific EIIA component</fullName>
    </recommendedName>
    <alternativeName>
        <fullName evidence="4">EIIA-Lac</fullName>
    </alternativeName>
    <alternativeName>
        <fullName evidence="4">EIII-Lac</fullName>
    </alternativeName>
    <alternativeName>
        <fullName evidence="4">Lactose-specific phosphotransferase enzyme IIA component</fullName>
    </alternativeName>
</protein>
<comment type="function">
    <text evidence="6">The phosphoenolpyruvate-dependent sugar phosphotransferase system (sugar PTS), a major carbohydrate active transport system, catalyzes the phosphorylation of incoming sugar substrates concomitantly with their translocation across the cell membrane. The enzyme II LacEF PTS system is involved in lactose transport.</text>
</comment>
<comment type="cofactor">
    <cofactor evidence="2">
        <name>Mg(2+)</name>
        <dbReference type="ChEBI" id="CHEBI:18420"/>
    </cofactor>
    <text evidence="2">Binds 1 Mg(2+) ion per trimer.</text>
</comment>
<comment type="subunit">
    <text evidence="1">Homotrimer.</text>
</comment>
<comment type="subcellular location">
    <subcellularLocation>
        <location evidence="5">Cytoplasm</location>
    </subcellularLocation>
</comment>
<comment type="induction">
    <text evidence="1">Induced by lactose, galactose and galactose-6-P. Repressed by glucose.</text>
</comment>
<comment type="domain">
    <text evidence="3">The PTS EIIA type-3 domain is phosphorylated by phospho-HPr on a histidyl residue. Then, it transfers the phosphoryl group to the PTS EIIB type-3 domain.</text>
</comment>
<gene>
    <name evidence="4" type="primary">lacF</name>
    <name type="ordered locus">SMU_1492</name>
</gene>
<dbReference type="EMBL" id="M80797">
    <property type="protein sequence ID" value="AAA26908.1"/>
    <property type="molecule type" value="Genomic_DNA"/>
</dbReference>
<dbReference type="EMBL" id="AE014133">
    <property type="protein sequence ID" value="AAN59146.1"/>
    <property type="molecule type" value="Genomic_DNA"/>
</dbReference>
<dbReference type="PIR" id="G43258">
    <property type="entry name" value="G43258"/>
</dbReference>
<dbReference type="RefSeq" id="NP_721840.1">
    <property type="nucleotide sequence ID" value="NC_004350.2"/>
</dbReference>
<dbReference type="RefSeq" id="WP_002263056.1">
    <property type="nucleotide sequence ID" value="NC_004350.2"/>
</dbReference>
<dbReference type="SMR" id="P26426"/>
<dbReference type="STRING" id="210007.SMU_1492"/>
<dbReference type="GeneID" id="93859074"/>
<dbReference type="KEGG" id="smu:SMU_1492"/>
<dbReference type="PATRIC" id="fig|210007.7.peg.1328"/>
<dbReference type="eggNOG" id="COG1447">
    <property type="taxonomic scope" value="Bacteria"/>
</dbReference>
<dbReference type="HOGENOM" id="CLU_152490_1_0_9"/>
<dbReference type="OrthoDB" id="350602at2"/>
<dbReference type="PhylomeDB" id="P26426"/>
<dbReference type="Proteomes" id="UP000002512">
    <property type="component" value="Chromosome"/>
</dbReference>
<dbReference type="GO" id="GO:0005737">
    <property type="term" value="C:cytoplasm"/>
    <property type="evidence" value="ECO:0007669"/>
    <property type="project" value="UniProtKB-SubCell"/>
</dbReference>
<dbReference type="GO" id="GO:0046872">
    <property type="term" value="F:metal ion binding"/>
    <property type="evidence" value="ECO:0007669"/>
    <property type="project" value="UniProtKB-KW"/>
</dbReference>
<dbReference type="GO" id="GO:0016740">
    <property type="term" value="F:transferase activity"/>
    <property type="evidence" value="ECO:0007669"/>
    <property type="project" value="UniProtKB-KW"/>
</dbReference>
<dbReference type="GO" id="GO:0009401">
    <property type="term" value="P:phosphoenolpyruvate-dependent sugar phosphotransferase system"/>
    <property type="evidence" value="ECO:0007669"/>
    <property type="project" value="UniProtKB-KW"/>
</dbReference>
<dbReference type="CDD" id="cd00215">
    <property type="entry name" value="PTS_IIA_lac"/>
    <property type="match status" value="1"/>
</dbReference>
<dbReference type="Gene3D" id="1.20.58.80">
    <property type="entry name" value="Phosphotransferase system, lactose/cellobiose-type IIA subunit"/>
    <property type="match status" value="1"/>
</dbReference>
<dbReference type="InterPro" id="IPR003188">
    <property type="entry name" value="PTS_IIA_lac/cel"/>
</dbReference>
<dbReference type="InterPro" id="IPR036542">
    <property type="entry name" value="PTS_IIA_lac/cel_sf"/>
</dbReference>
<dbReference type="NCBIfam" id="TIGR00823">
    <property type="entry name" value="EIIA-LAC"/>
    <property type="match status" value="1"/>
</dbReference>
<dbReference type="PANTHER" id="PTHR34382:SF9">
    <property type="entry name" value="PHOSPHOTRANSFERASE SYSTEM SUGAR-SPECIFIC EII COMPONENT"/>
    <property type="match status" value="1"/>
</dbReference>
<dbReference type="PANTHER" id="PTHR34382">
    <property type="entry name" value="PTS SYSTEM N,N'-DIACETYLCHITOBIOSE-SPECIFIC EIIA COMPONENT"/>
    <property type="match status" value="1"/>
</dbReference>
<dbReference type="Pfam" id="PF02255">
    <property type="entry name" value="PTS_IIA"/>
    <property type="match status" value="1"/>
</dbReference>
<dbReference type="PIRSF" id="PIRSF000699">
    <property type="entry name" value="PTS_IILac_III"/>
    <property type="match status" value="1"/>
</dbReference>
<dbReference type="SUPFAM" id="SSF46973">
    <property type="entry name" value="Enzyme IIa from lactose specific PTS, IIa-lac"/>
    <property type="match status" value="1"/>
</dbReference>
<dbReference type="PROSITE" id="PS51095">
    <property type="entry name" value="PTS_EIIA_TYPE_3"/>
    <property type="match status" value="1"/>
</dbReference>
<sequence length="104" mass="11399">MNREEATLLGFEIVAYAGDARSKLLEALNAAQAGEYDRAEELVAAADDCIVDAHKAQTSLLAKEAQGDDIELSVTLMHGQDHLMTTILLKDLMKHLIELYKRGS</sequence>
<feature type="chain" id="PRO_0000186607" description="PTS system lactose-specific EIIA component">
    <location>
        <begin position="1"/>
        <end position="104"/>
    </location>
</feature>
<feature type="domain" description="PTS EIIA type-3" evidence="3">
    <location>
        <begin position="4"/>
        <end position="102"/>
    </location>
</feature>
<feature type="active site" description="Tele-phosphohistidine intermediate" evidence="1">
    <location>
        <position position="78"/>
    </location>
</feature>
<feature type="binding site" evidence="2">
    <location>
        <position position="81"/>
    </location>
    <ligand>
        <name>Mg(2+)</name>
        <dbReference type="ChEBI" id="CHEBI:18420"/>
        <note>ligand shared between all trimeric partners</note>
    </ligand>
</feature>
<feature type="modified residue" description="Phosphohistidine; by HPr" evidence="1 3">
    <location>
        <position position="78"/>
    </location>
</feature>